<name>RL9_COXBU</name>
<protein>
    <recommendedName>
        <fullName evidence="1">Large ribosomal subunit protein bL9</fullName>
    </recommendedName>
    <alternativeName>
        <fullName evidence="3">50S ribosomal protein L9</fullName>
    </alternativeName>
</protein>
<reference key="1">
    <citation type="journal article" date="2003" name="Proc. Natl. Acad. Sci. U.S.A.">
        <title>Complete genome sequence of the Q-fever pathogen, Coxiella burnetii.</title>
        <authorList>
            <person name="Seshadri R."/>
            <person name="Paulsen I.T."/>
            <person name="Eisen J.A."/>
            <person name="Read T.D."/>
            <person name="Nelson K.E."/>
            <person name="Nelson W.C."/>
            <person name="Ward N.L."/>
            <person name="Tettelin H."/>
            <person name="Davidsen T.M."/>
            <person name="Beanan M.J."/>
            <person name="DeBoy R.T."/>
            <person name="Daugherty S.C."/>
            <person name="Brinkac L.M."/>
            <person name="Madupu R."/>
            <person name="Dodson R.J."/>
            <person name="Khouri H.M."/>
            <person name="Lee K.H."/>
            <person name="Carty H.A."/>
            <person name="Scanlan D."/>
            <person name="Heinzen R.A."/>
            <person name="Thompson H.A."/>
            <person name="Samuel J.E."/>
            <person name="Fraser C.M."/>
            <person name="Heidelberg J.F."/>
        </authorList>
    </citation>
    <scope>NUCLEOTIDE SEQUENCE [LARGE SCALE GENOMIC DNA]</scope>
    <source>
        <strain>RSA 493 / Nine Mile phase I</strain>
    </source>
</reference>
<reference key="2">
    <citation type="journal article" date="2007" name="Infect. Immun.">
        <title>Proteome and antigen profiling of Coxiella burnetii developmental forms.</title>
        <authorList>
            <person name="Coleman S.A."/>
            <person name="Fischer E.R."/>
            <person name="Cockrell D.C."/>
            <person name="Voth D.E."/>
            <person name="Howe D."/>
            <person name="Mead D.J."/>
            <person name="Samuel J.E."/>
            <person name="Heinzen R.A."/>
        </authorList>
    </citation>
    <scope>IDENTIFICATION BY MASS SPECTROMETRY</scope>
    <scope>DEVELOPMENTAL STAGE</scope>
    <source>
        <strain>Nine Mile Crazy / RSA 514</strain>
    </source>
</reference>
<comment type="function">
    <text evidence="1">Binds to the 23S rRNA.</text>
</comment>
<comment type="developmental stage">
    <text evidence="2">More than twofold more abundant in the large cell variant (LCV) stage than in the small cell variant (SCV) stage (at protein level). LCVs are more metabolically active than SCVs.</text>
</comment>
<comment type="similarity">
    <text evidence="1">Belongs to the bacterial ribosomal protein bL9 family.</text>
</comment>
<comment type="sequence caution" evidence="3">
    <conflict type="erroneous initiation">
        <sequence resource="EMBL-CDS" id="AAO90400"/>
    </conflict>
</comment>
<feature type="chain" id="PRO_0000236513" description="Large ribosomal subunit protein bL9">
    <location>
        <begin position="1"/>
        <end position="152"/>
    </location>
</feature>
<evidence type="ECO:0000255" key="1">
    <source>
        <dbReference type="HAMAP-Rule" id="MF_00503"/>
    </source>
</evidence>
<evidence type="ECO:0000269" key="2">
    <source>
    </source>
</evidence>
<evidence type="ECO:0000305" key="3"/>
<proteinExistence type="evidence at protein level"/>
<organism>
    <name type="scientific">Coxiella burnetii (strain RSA 493 / Nine Mile phase I)</name>
    <dbReference type="NCBI Taxonomy" id="227377"/>
    <lineage>
        <taxon>Bacteria</taxon>
        <taxon>Pseudomonadati</taxon>
        <taxon>Pseudomonadota</taxon>
        <taxon>Gammaproteobacteria</taxon>
        <taxon>Legionellales</taxon>
        <taxon>Coxiellaceae</taxon>
        <taxon>Coxiella</taxon>
    </lineage>
</organism>
<sequence length="152" mass="16580">MKLILQEKVANLGNIGDQVVVKPGYARNFLLPLGKAVPATPEHIAEFEKQRAELEKAAAELLAKAKARAKKLEDKSFKITANASDEGRLFGSIGPREIAQAITEAGIEIEKREVDLSQGPIRQVGEYEVPLRLHTDVSVNVKIEVAPENSNS</sequence>
<gene>
    <name evidence="1" type="primary">rplI</name>
    <name type="ordered locus">CBU_0867</name>
</gene>
<keyword id="KW-1185">Reference proteome</keyword>
<keyword id="KW-0687">Ribonucleoprotein</keyword>
<keyword id="KW-0689">Ribosomal protein</keyword>
<keyword id="KW-0694">RNA-binding</keyword>
<keyword id="KW-0699">rRNA-binding</keyword>
<accession>Q83D73</accession>
<dbReference type="EMBL" id="AE016828">
    <property type="protein sequence ID" value="AAO90400.2"/>
    <property type="status" value="ALT_INIT"/>
    <property type="molecule type" value="Genomic_DNA"/>
</dbReference>
<dbReference type="RefSeq" id="NP_819886.3">
    <property type="nucleotide sequence ID" value="NC_002971.4"/>
</dbReference>
<dbReference type="RefSeq" id="WP_012220438.1">
    <property type="nucleotide sequence ID" value="NC_002971.4"/>
</dbReference>
<dbReference type="SMR" id="Q83D73"/>
<dbReference type="STRING" id="227377.CBU_0867"/>
<dbReference type="DNASU" id="1208760"/>
<dbReference type="EnsemblBacteria" id="AAO90400">
    <property type="protein sequence ID" value="AAO90400"/>
    <property type="gene ID" value="CBU_0867"/>
</dbReference>
<dbReference type="GeneID" id="1208760"/>
<dbReference type="KEGG" id="cbu:CBU_0867"/>
<dbReference type="PATRIC" id="fig|227377.7.peg.852"/>
<dbReference type="eggNOG" id="COG0359">
    <property type="taxonomic scope" value="Bacteria"/>
</dbReference>
<dbReference type="HOGENOM" id="CLU_078938_4_1_6"/>
<dbReference type="OrthoDB" id="9788336at2"/>
<dbReference type="Proteomes" id="UP000002671">
    <property type="component" value="Chromosome"/>
</dbReference>
<dbReference type="GO" id="GO:0022625">
    <property type="term" value="C:cytosolic large ribosomal subunit"/>
    <property type="evidence" value="ECO:0000318"/>
    <property type="project" value="GO_Central"/>
</dbReference>
<dbReference type="GO" id="GO:0019843">
    <property type="term" value="F:rRNA binding"/>
    <property type="evidence" value="ECO:0007669"/>
    <property type="project" value="UniProtKB-UniRule"/>
</dbReference>
<dbReference type="GO" id="GO:0003735">
    <property type="term" value="F:structural constituent of ribosome"/>
    <property type="evidence" value="ECO:0007669"/>
    <property type="project" value="InterPro"/>
</dbReference>
<dbReference type="GO" id="GO:0006412">
    <property type="term" value="P:translation"/>
    <property type="evidence" value="ECO:0007669"/>
    <property type="project" value="UniProtKB-UniRule"/>
</dbReference>
<dbReference type="Gene3D" id="3.10.430.100">
    <property type="entry name" value="Ribosomal protein L9, C-terminal domain"/>
    <property type="match status" value="1"/>
</dbReference>
<dbReference type="Gene3D" id="3.40.5.10">
    <property type="entry name" value="Ribosomal protein L9, N-terminal domain"/>
    <property type="match status" value="1"/>
</dbReference>
<dbReference type="HAMAP" id="MF_00503">
    <property type="entry name" value="Ribosomal_bL9"/>
    <property type="match status" value="1"/>
</dbReference>
<dbReference type="InterPro" id="IPR000244">
    <property type="entry name" value="Ribosomal_bL9"/>
</dbReference>
<dbReference type="InterPro" id="IPR009027">
    <property type="entry name" value="Ribosomal_bL9/RNase_H1_N"/>
</dbReference>
<dbReference type="InterPro" id="IPR020594">
    <property type="entry name" value="Ribosomal_bL9_bac/chp"/>
</dbReference>
<dbReference type="InterPro" id="IPR020069">
    <property type="entry name" value="Ribosomal_bL9_C"/>
</dbReference>
<dbReference type="InterPro" id="IPR036791">
    <property type="entry name" value="Ribosomal_bL9_C_sf"/>
</dbReference>
<dbReference type="InterPro" id="IPR020070">
    <property type="entry name" value="Ribosomal_bL9_N"/>
</dbReference>
<dbReference type="InterPro" id="IPR036935">
    <property type="entry name" value="Ribosomal_bL9_N_sf"/>
</dbReference>
<dbReference type="NCBIfam" id="TIGR00158">
    <property type="entry name" value="L9"/>
    <property type="match status" value="1"/>
</dbReference>
<dbReference type="PANTHER" id="PTHR21368">
    <property type="entry name" value="50S RIBOSOMAL PROTEIN L9"/>
    <property type="match status" value="1"/>
</dbReference>
<dbReference type="Pfam" id="PF03948">
    <property type="entry name" value="Ribosomal_L9_C"/>
    <property type="match status" value="1"/>
</dbReference>
<dbReference type="Pfam" id="PF01281">
    <property type="entry name" value="Ribosomal_L9_N"/>
    <property type="match status" value="1"/>
</dbReference>
<dbReference type="SUPFAM" id="SSF55658">
    <property type="entry name" value="L9 N-domain-like"/>
    <property type="match status" value="1"/>
</dbReference>
<dbReference type="SUPFAM" id="SSF55653">
    <property type="entry name" value="Ribosomal protein L9 C-domain"/>
    <property type="match status" value="1"/>
</dbReference>
<dbReference type="PROSITE" id="PS00651">
    <property type="entry name" value="RIBOSOMAL_L9"/>
    <property type="match status" value="1"/>
</dbReference>